<evidence type="ECO:0000255" key="1">
    <source>
        <dbReference type="PROSITE-ProRule" id="PRU00435"/>
    </source>
</evidence>
<evidence type="ECO:0000305" key="2"/>
<comment type="sequence caution" evidence="2">
    <conflict type="erroneous initiation">
        <sequence resource="EMBL-CDS" id="BAA19363"/>
    </conflict>
</comment>
<accession>P96673</accession>
<accession>O31495</accession>
<name>YDEP_BACSU</name>
<feature type="chain" id="PRO_0000148883" description="Uncharacterized HTH-type transcriptional regulator YdeP">
    <location>
        <begin position="1"/>
        <end position="128"/>
    </location>
</feature>
<feature type="domain" description="HTH hxlR-type" evidence="1">
    <location>
        <begin position="18"/>
        <end position="116"/>
    </location>
</feature>
<gene>
    <name type="primary">ydeP</name>
    <name type="ordered locus">BSU05290</name>
</gene>
<protein>
    <recommendedName>
        <fullName>Uncharacterized HTH-type transcriptional regulator YdeP</fullName>
    </recommendedName>
</protein>
<organism>
    <name type="scientific">Bacillus subtilis (strain 168)</name>
    <dbReference type="NCBI Taxonomy" id="224308"/>
    <lineage>
        <taxon>Bacteria</taxon>
        <taxon>Bacillati</taxon>
        <taxon>Bacillota</taxon>
        <taxon>Bacilli</taxon>
        <taxon>Bacillales</taxon>
        <taxon>Bacillaceae</taxon>
        <taxon>Bacillus</taxon>
    </lineage>
</organism>
<dbReference type="EMBL" id="AB001488">
    <property type="protein sequence ID" value="BAA19363.1"/>
    <property type="status" value="ALT_INIT"/>
    <property type="molecule type" value="Genomic_DNA"/>
</dbReference>
<dbReference type="EMBL" id="AL009126">
    <property type="protein sequence ID" value="CAB12336.1"/>
    <property type="molecule type" value="Genomic_DNA"/>
</dbReference>
<dbReference type="PIR" id="B69779">
    <property type="entry name" value="B69779"/>
</dbReference>
<dbReference type="RefSeq" id="NP_388410.1">
    <property type="nucleotide sequence ID" value="NC_000964.3"/>
</dbReference>
<dbReference type="RefSeq" id="WP_003242640.1">
    <property type="nucleotide sequence ID" value="NZ_OZ025638.1"/>
</dbReference>
<dbReference type="SMR" id="P96673"/>
<dbReference type="FunCoup" id="P96673">
    <property type="interactions" value="131"/>
</dbReference>
<dbReference type="STRING" id="224308.BSU05290"/>
<dbReference type="PaxDb" id="224308-BSU05290"/>
<dbReference type="DNASU" id="938100"/>
<dbReference type="EnsemblBacteria" id="CAB12336">
    <property type="protein sequence ID" value="CAB12336"/>
    <property type="gene ID" value="BSU_05290"/>
</dbReference>
<dbReference type="GeneID" id="938100"/>
<dbReference type="KEGG" id="bsu:BSU05290"/>
<dbReference type="PATRIC" id="fig|224308.43.peg.550"/>
<dbReference type="eggNOG" id="COG1733">
    <property type="taxonomic scope" value="Bacteria"/>
</dbReference>
<dbReference type="InParanoid" id="P96673"/>
<dbReference type="OrthoDB" id="9791143at2"/>
<dbReference type="PhylomeDB" id="P96673"/>
<dbReference type="BioCyc" id="BSUB:BSU05290-MONOMER"/>
<dbReference type="Proteomes" id="UP000001570">
    <property type="component" value="Chromosome"/>
</dbReference>
<dbReference type="GO" id="GO:0003677">
    <property type="term" value="F:DNA binding"/>
    <property type="evidence" value="ECO:0007669"/>
    <property type="project" value="UniProtKB-KW"/>
</dbReference>
<dbReference type="Gene3D" id="1.10.10.10">
    <property type="entry name" value="Winged helix-like DNA-binding domain superfamily/Winged helix DNA-binding domain"/>
    <property type="match status" value="1"/>
</dbReference>
<dbReference type="InterPro" id="IPR002577">
    <property type="entry name" value="HTH_HxlR"/>
</dbReference>
<dbReference type="InterPro" id="IPR036388">
    <property type="entry name" value="WH-like_DNA-bd_sf"/>
</dbReference>
<dbReference type="InterPro" id="IPR036390">
    <property type="entry name" value="WH_DNA-bd_sf"/>
</dbReference>
<dbReference type="PANTHER" id="PTHR33204">
    <property type="entry name" value="TRANSCRIPTIONAL REGULATOR, MARR FAMILY"/>
    <property type="match status" value="1"/>
</dbReference>
<dbReference type="PANTHER" id="PTHR33204:SF33">
    <property type="entry name" value="TRANSCRIPTIONAL REGULATOR, MARR FAMILY"/>
    <property type="match status" value="1"/>
</dbReference>
<dbReference type="Pfam" id="PF01638">
    <property type="entry name" value="HxlR"/>
    <property type="match status" value="1"/>
</dbReference>
<dbReference type="SUPFAM" id="SSF46785">
    <property type="entry name" value="Winged helix' DNA-binding domain"/>
    <property type="match status" value="1"/>
</dbReference>
<dbReference type="PROSITE" id="PS51118">
    <property type="entry name" value="HTH_HXLR"/>
    <property type="match status" value="1"/>
</dbReference>
<proteinExistence type="predicted"/>
<reference key="1">
    <citation type="submission" date="1997-03" db="EMBL/GenBank/DDBJ databases">
        <title>A 148 kbp sequence of the region between 35 and 47 degree of the Bacillus subtilis genome.</title>
        <authorList>
            <person name="Kasahara Y."/>
            <person name="Nakai S."/>
            <person name="Lee S."/>
            <person name="Sadaie Y."/>
            <person name="Ogasawara N."/>
        </authorList>
    </citation>
    <scope>NUCLEOTIDE SEQUENCE [GENOMIC DNA]</scope>
    <source>
        <strain>168</strain>
    </source>
</reference>
<reference key="2">
    <citation type="journal article" date="1997" name="Nature">
        <title>The complete genome sequence of the Gram-positive bacterium Bacillus subtilis.</title>
        <authorList>
            <person name="Kunst F."/>
            <person name="Ogasawara N."/>
            <person name="Moszer I."/>
            <person name="Albertini A.M."/>
            <person name="Alloni G."/>
            <person name="Azevedo V."/>
            <person name="Bertero M.G."/>
            <person name="Bessieres P."/>
            <person name="Bolotin A."/>
            <person name="Borchert S."/>
            <person name="Borriss R."/>
            <person name="Boursier L."/>
            <person name="Brans A."/>
            <person name="Braun M."/>
            <person name="Brignell S.C."/>
            <person name="Bron S."/>
            <person name="Brouillet S."/>
            <person name="Bruschi C.V."/>
            <person name="Caldwell B."/>
            <person name="Capuano V."/>
            <person name="Carter N.M."/>
            <person name="Choi S.-K."/>
            <person name="Codani J.-J."/>
            <person name="Connerton I.F."/>
            <person name="Cummings N.J."/>
            <person name="Daniel R.A."/>
            <person name="Denizot F."/>
            <person name="Devine K.M."/>
            <person name="Duesterhoeft A."/>
            <person name="Ehrlich S.D."/>
            <person name="Emmerson P.T."/>
            <person name="Entian K.-D."/>
            <person name="Errington J."/>
            <person name="Fabret C."/>
            <person name="Ferrari E."/>
            <person name="Foulger D."/>
            <person name="Fritz C."/>
            <person name="Fujita M."/>
            <person name="Fujita Y."/>
            <person name="Fuma S."/>
            <person name="Galizzi A."/>
            <person name="Galleron N."/>
            <person name="Ghim S.-Y."/>
            <person name="Glaser P."/>
            <person name="Goffeau A."/>
            <person name="Golightly E.J."/>
            <person name="Grandi G."/>
            <person name="Guiseppi G."/>
            <person name="Guy B.J."/>
            <person name="Haga K."/>
            <person name="Haiech J."/>
            <person name="Harwood C.R."/>
            <person name="Henaut A."/>
            <person name="Hilbert H."/>
            <person name="Holsappel S."/>
            <person name="Hosono S."/>
            <person name="Hullo M.-F."/>
            <person name="Itaya M."/>
            <person name="Jones L.-M."/>
            <person name="Joris B."/>
            <person name="Karamata D."/>
            <person name="Kasahara Y."/>
            <person name="Klaerr-Blanchard M."/>
            <person name="Klein C."/>
            <person name="Kobayashi Y."/>
            <person name="Koetter P."/>
            <person name="Koningstein G."/>
            <person name="Krogh S."/>
            <person name="Kumano M."/>
            <person name="Kurita K."/>
            <person name="Lapidus A."/>
            <person name="Lardinois S."/>
            <person name="Lauber J."/>
            <person name="Lazarevic V."/>
            <person name="Lee S.-M."/>
            <person name="Levine A."/>
            <person name="Liu H."/>
            <person name="Masuda S."/>
            <person name="Mauel C."/>
            <person name="Medigue C."/>
            <person name="Medina N."/>
            <person name="Mellado R.P."/>
            <person name="Mizuno M."/>
            <person name="Moestl D."/>
            <person name="Nakai S."/>
            <person name="Noback M."/>
            <person name="Noone D."/>
            <person name="O'Reilly M."/>
            <person name="Ogawa K."/>
            <person name="Ogiwara A."/>
            <person name="Oudega B."/>
            <person name="Park S.-H."/>
            <person name="Parro V."/>
            <person name="Pohl T.M."/>
            <person name="Portetelle D."/>
            <person name="Porwollik S."/>
            <person name="Prescott A.M."/>
            <person name="Presecan E."/>
            <person name="Pujic P."/>
            <person name="Purnelle B."/>
            <person name="Rapoport G."/>
            <person name="Rey M."/>
            <person name="Reynolds S."/>
            <person name="Rieger M."/>
            <person name="Rivolta C."/>
            <person name="Rocha E."/>
            <person name="Roche B."/>
            <person name="Rose M."/>
            <person name="Sadaie Y."/>
            <person name="Sato T."/>
            <person name="Scanlan E."/>
            <person name="Schleich S."/>
            <person name="Schroeter R."/>
            <person name="Scoffone F."/>
            <person name="Sekiguchi J."/>
            <person name="Sekowska A."/>
            <person name="Seror S.J."/>
            <person name="Serror P."/>
            <person name="Shin B.-S."/>
            <person name="Soldo B."/>
            <person name="Sorokin A."/>
            <person name="Tacconi E."/>
            <person name="Takagi T."/>
            <person name="Takahashi H."/>
            <person name="Takemaru K."/>
            <person name="Takeuchi M."/>
            <person name="Tamakoshi A."/>
            <person name="Tanaka T."/>
            <person name="Terpstra P."/>
            <person name="Tognoni A."/>
            <person name="Tosato V."/>
            <person name="Uchiyama S."/>
            <person name="Vandenbol M."/>
            <person name="Vannier F."/>
            <person name="Vassarotti A."/>
            <person name="Viari A."/>
            <person name="Wambutt R."/>
            <person name="Wedler E."/>
            <person name="Wedler H."/>
            <person name="Weitzenegger T."/>
            <person name="Winters P."/>
            <person name="Wipat A."/>
            <person name="Yamamoto H."/>
            <person name="Yamane K."/>
            <person name="Yasumoto K."/>
            <person name="Yata K."/>
            <person name="Yoshida K."/>
            <person name="Yoshikawa H.-F."/>
            <person name="Zumstein E."/>
            <person name="Yoshikawa H."/>
            <person name="Danchin A."/>
        </authorList>
    </citation>
    <scope>NUCLEOTIDE SEQUENCE [LARGE SCALE GENOMIC DNA]</scope>
    <source>
        <strain>168</strain>
    </source>
</reference>
<keyword id="KW-0238">DNA-binding</keyword>
<keyword id="KW-1185">Reference proteome</keyword>
<keyword id="KW-0804">Transcription</keyword>
<keyword id="KW-0805">Transcription regulation</keyword>
<sequence>MRNRKLGIDYSSDDFEGCPVETTLDIIGGKWKGILLYHLIDGKKRFNEFRKLYPKITQRMLTLQLRELERDGVIHREVYKQVPPKVEYSLTEFGRTLEPVILHMKDWGEKYKDRIDKLEAARKAEDKI</sequence>